<sequence>MPKREDIRKIMVIGSGPIVIGQAAEFDYSGSQACKALREEGYEVVLVNSNPATIMTDPEMADRVYIEPLDAEIVAKIIERETPDALLPTLGGQTALNLAVQLTEMGVLDKYGVELIGAKFEAIKKAEDRELFKEAMRKIGLDVPKSDVAHDVSEALAIADEIGYPVVVRPAFTLGGTGGGIAYNREELREIAERGIKMSMINQVLIEEGVLGWKEFELEVMRDLADNVVIICSIENFDPMGVHTGDSITVAPAQTLTDVEYQYLRDAAIKIIREIGVETGGSNIQFAVHPENGRVVAIEMNPRVSRSSALASKATGFPIAKIAAKLAVGYTLDEIPNDITKETPASFEPTIDYVVVKIPRFAFDKFPTANQVLGSQMKSVGEVMAVGRTFEEALQKAIRSLEIGRYGLGCDGKDKEVTMEEIRERLRYPNASRVFYIRYALQKGMSVNEIYELTKIDPWFIDKIKNLVEFEEQLKQIAERMSIEEVPKEILKKAKELGYSDRQLAVIFNTTEREVRRVRKGKGLRVVYKMVDTCAAEFEAKTPYYYSTYEDENEALRSERKKVMILGAGPNRIGQGIEFDYCCVHAVFSLKDEGYETIMVNCNPETVSTDYDTSDRLYFEPITHEDVMNIYENEQPEGVIVQFGGQTPLNIARELEDSGARILGTSVDSIDIAEDRERFAELLERLNIPQPENGIAHSLEEAKEIARKIGFPVLVRPSYVLGGRAMEIVYDEETLERYITEALEVSPEKPILIDKFLEDAIEVEVDALCDGEEVVIGGIMEHIEEAGVHSGDSACVLPPVSLDEVTINTIVDYTRKLALALNVVGLINIQYAVKDGKVYVLEANPRASRTVPFVSKATGIPLAKIAAKLMMGKKLRELGVKEKLKLKHVAVKEAVFPFIKLPGVDPVLGPEMKSTGEVMGIDYDFGLAYYKAELAAGMKLPLKGTVFISVRRKDKNDRLLYLARKFKELGFRIIATDGTRDFLVQNGIEADLILKISQGRPNILDAIVNGQVDLIINTPSGKRGRTEGYMIRRAAVDYGVAHITTLAGAMAAVRAIEAVKSRKMVVKSIQEYHEES</sequence>
<accession>O28994</accession>
<name>CARB_ARCFU</name>
<reference key="1">
    <citation type="journal article" date="1997" name="Nature">
        <title>The complete genome sequence of the hyperthermophilic, sulphate-reducing archaeon Archaeoglobus fulgidus.</title>
        <authorList>
            <person name="Klenk H.-P."/>
            <person name="Clayton R.A."/>
            <person name="Tomb J.-F."/>
            <person name="White O."/>
            <person name="Nelson K.E."/>
            <person name="Ketchum K.A."/>
            <person name="Dodson R.J."/>
            <person name="Gwinn M.L."/>
            <person name="Hickey E.K."/>
            <person name="Peterson J.D."/>
            <person name="Richardson D.L."/>
            <person name="Kerlavage A.R."/>
            <person name="Graham D.E."/>
            <person name="Kyrpides N.C."/>
            <person name="Fleischmann R.D."/>
            <person name="Quackenbush J."/>
            <person name="Lee N.H."/>
            <person name="Sutton G.G."/>
            <person name="Gill S.R."/>
            <person name="Kirkness E.F."/>
            <person name="Dougherty B.A."/>
            <person name="McKenney K."/>
            <person name="Adams M.D."/>
            <person name="Loftus B.J."/>
            <person name="Peterson S.N."/>
            <person name="Reich C.I."/>
            <person name="McNeil L.K."/>
            <person name="Badger J.H."/>
            <person name="Glodek A."/>
            <person name="Zhou L."/>
            <person name="Overbeek R."/>
            <person name="Gocayne J.D."/>
            <person name="Weidman J.F."/>
            <person name="McDonald L.A."/>
            <person name="Utterback T.R."/>
            <person name="Cotton M.D."/>
            <person name="Spriggs T."/>
            <person name="Artiach P."/>
            <person name="Kaine B.P."/>
            <person name="Sykes S.M."/>
            <person name="Sadow P.W."/>
            <person name="D'Andrea K.P."/>
            <person name="Bowman C."/>
            <person name="Fujii C."/>
            <person name="Garland S.A."/>
            <person name="Mason T.M."/>
            <person name="Olsen G.J."/>
            <person name="Fraser C.M."/>
            <person name="Smith H.O."/>
            <person name="Woese C.R."/>
            <person name="Venter J.C."/>
        </authorList>
    </citation>
    <scope>NUCLEOTIDE SEQUENCE [LARGE SCALE GENOMIC DNA]</scope>
    <source>
        <strain>ATCC 49558 / DSM 4304 / JCM 9628 / NBRC 100126 / VC-16</strain>
    </source>
</reference>
<proteinExistence type="inferred from homology"/>
<feature type="chain" id="PRO_0000145071" description="Carbamoyl phosphate synthase large chain">
    <location>
        <begin position="1"/>
        <end position="1076"/>
    </location>
</feature>
<feature type="domain" description="ATP-grasp 1" evidence="1">
    <location>
        <begin position="133"/>
        <end position="328"/>
    </location>
</feature>
<feature type="domain" description="ATP-grasp 2" evidence="1">
    <location>
        <begin position="680"/>
        <end position="871"/>
    </location>
</feature>
<feature type="domain" description="MGS-like" evidence="1">
    <location>
        <begin position="938"/>
        <end position="1076"/>
    </location>
</feature>
<feature type="region of interest" description="Carboxyphosphate synthetic domain" evidence="1">
    <location>
        <begin position="1"/>
        <end position="402"/>
    </location>
</feature>
<feature type="region of interest" description="Oligomerization domain" evidence="1">
    <location>
        <begin position="403"/>
        <end position="555"/>
    </location>
</feature>
<feature type="region of interest" description="Carbamoyl phosphate synthetic domain" evidence="1">
    <location>
        <begin position="556"/>
        <end position="939"/>
    </location>
</feature>
<feature type="region of interest" description="Allosteric domain" evidence="1">
    <location>
        <begin position="940"/>
        <end position="1076"/>
    </location>
</feature>
<feature type="binding site" evidence="1">
    <location>
        <position position="129"/>
    </location>
    <ligand>
        <name>ATP</name>
        <dbReference type="ChEBI" id="CHEBI:30616"/>
        <label>1</label>
    </ligand>
</feature>
<feature type="binding site" evidence="1">
    <location>
        <position position="169"/>
    </location>
    <ligand>
        <name>ATP</name>
        <dbReference type="ChEBI" id="CHEBI:30616"/>
        <label>1</label>
    </ligand>
</feature>
<feature type="binding site" evidence="1">
    <location>
        <position position="175"/>
    </location>
    <ligand>
        <name>ATP</name>
        <dbReference type="ChEBI" id="CHEBI:30616"/>
        <label>1</label>
    </ligand>
</feature>
<feature type="binding site" evidence="1">
    <location>
        <position position="176"/>
    </location>
    <ligand>
        <name>ATP</name>
        <dbReference type="ChEBI" id="CHEBI:30616"/>
        <label>1</label>
    </ligand>
</feature>
<feature type="binding site" evidence="1">
    <location>
        <position position="208"/>
    </location>
    <ligand>
        <name>ATP</name>
        <dbReference type="ChEBI" id="CHEBI:30616"/>
        <label>1</label>
    </ligand>
</feature>
<feature type="binding site" evidence="1">
    <location>
        <position position="210"/>
    </location>
    <ligand>
        <name>ATP</name>
        <dbReference type="ChEBI" id="CHEBI:30616"/>
        <label>1</label>
    </ligand>
</feature>
<feature type="binding site" evidence="1">
    <location>
        <position position="215"/>
    </location>
    <ligand>
        <name>ATP</name>
        <dbReference type="ChEBI" id="CHEBI:30616"/>
        <label>1</label>
    </ligand>
</feature>
<feature type="binding site" evidence="1">
    <location>
        <position position="241"/>
    </location>
    <ligand>
        <name>ATP</name>
        <dbReference type="ChEBI" id="CHEBI:30616"/>
        <label>1</label>
    </ligand>
</feature>
<feature type="binding site" evidence="1">
    <location>
        <position position="242"/>
    </location>
    <ligand>
        <name>ATP</name>
        <dbReference type="ChEBI" id="CHEBI:30616"/>
        <label>1</label>
    </ligand>
</feature>
<feature type="binding site" evidence="1">
    <location>
        <position position="243"/>
    </location>
    <ligand>
        <name>ATP</name>
        <dbReference type="ChEBI" id="CHEBI:30616"/>
        <label>1</label>
    </ligand>
</feature>
<feature type="binding site" evidence="1">
    <location>
        <position position="285"/>
    </location>
    <ligand>
        <name>ATP</name>
        <dbReference type="ChEBI" id="CHEBI:30616"/>
        <label>1</label>
    </ligand>
</feature>
<feature type="binding site" evidence="1">
    <location>
        <position position="285"/>
    </location>
    <ligand>
        <name>Mg(2+)</name>
        <dbReference type="ChEBI" id="CHEBI:18420"/>
        <label>1</label>
    </ligand>
</feature>
<feature type="binding site" evidence="1">
    <location>
        <position position="285"/>
    </location>
    <ligand>
        <name>Mn(2+)</name>
        <dbReference type="ChEBI" id="CHEBI:29035"/>
        <label>1</label>
    </ligand>
</feature>
<feature type="binding site" evidence="1">
    <location>
        <position position="299"/>
    </location>
    <ligand>
        <name>ATP</name>
        <dbReference type="ChEBI" id="CHEBI:30616"/>
        <label>1</label>
    </ligand>
</feature>
<feature type="binding site" evidence="1">
    <location>
        <position position="299"/>
    </location>
    <ligand>
        <name>Mg(2+)</name>
        <dbReference type="ChEBI" id="CHEBI:18420"/>
        <label>1</label>
    </ligand>
</feature>
<feature type="binding site" evidence="1">
    <location>
        <position position="299"/>
    </location>
    <ligand>
        <name>Mg(2+)</name>
        <dbReference type="ChEBI" id="CHEBI:18420"/>
        <label>2</label>
    </ligand>
</feature>
<feature type="binding site" evidence="1">
    <location>
        <position position="299"/>
    </location>
    <ligand>
        <name>Mn(2+)</name>
        <dbReference type="ChEBI" id="CHEBI:29035"/>
        <label>1</label>
    </ligand>
</feature>
<feature type="binding site" evidence="1">
    <location>
        <position position="299"/>
    </location>
    <ligand>
        <name>Mn(2+)</name>
        <dbReference type="ChEBI" id="CHEBI:29035"/>
        <label>2</label>
    </ligand>
</feature>
<feature type="binding site" evidence="1">
    <location>
        <position position="301"/>
    </location>
    <ligand>
        <name>Mg(2+)</name>
        <dbReference type="ChEBI" id="CHEBI:18420"/>
        <label>2</label>
    </ligand>
</feature>
<feature type="binding site" evidence="1">
    <location>
        <position position="301"/>
    </location>
    <ligand>
        <name>Mn(2+)</name>
        <dbReference type="ChEBI" id="CHEBI:29035"/>
        <label>2</label>
    </ligand>
</feature>
<feature type="binding site" evidence="1">
    <location>
        <position position="716"/>
    </location>
    <ligand>
        <name>ATP</name>
        <dbReference type="ChEBI" id="CHEBI:30616"/>
        <label>2</label>
    </ligand>
</feature>
<feature type="binding site" evidence="1">
    <location>
        <position position="755"/>
    </location>
    <ligand>
        <name>ATP</name>
        <dbReference type="ChEBI" id="CHEBI:30616"/>
        <label>2</label>
    </ligand>
</feature>
<feature type="binding site" evidence="1">
    <location>
        <position position="757"/>
    </location>
    <ligand>
        <name>ATP</name>
        <dbReference type="ChEBI" id="CHEBI:30616"/>
        <label>2</label>
    </ligand>
</feature>
<feature type="binding site" evidence="1">
    <location>
        <position position="762"/>
    </location>
    <ligand>
        <name>ATP</name>
        <dbReference type="ChEBI" id="CHEBI:30616"/>
        <label>2</label>
    </ligand>
</feature>
<feature type="binding site" evidence="1">
    <location>
        <position position="787"/>
    </location>
    <ligand>
        <name>ATP</name>
        <dbReference type="ChEBI" id="CHEBI:30616"/>
        <label>2</label>
    </ligand>
</feature>
<feature type="binding site" evidence="1">
    <location>
        <position position="788"/>
    </location>
    <ligand>
        <name>ATP</name>
        <dbReference type="ChEBI" id="CHEBI:30616"/>
        <label>2</label>
    </ligand>
</feature>
<feature type="binding site" evidence="1">
    <location>
        <position position="789"/>
    </location>
    <ligand>
        <name>ATP</name>
        <dbReference type="ChEBI" id="CHEBI:30616"/>
        <label>2</label>
    </ligand>
</feature>
<feature type="binding site" evidence="1">
    <location>
        <position position="790"/>
    </location>
    <ligand>
        <name>ATP</name>
        <dbReference type="ChEBI" id="CHEBI:30616"/>
        <label>2</label>
    </ligand>
</feature>
<feature type="binding site" evidence="1">
    <location>
        <position position="830"/>
    </location>
    <ligand>
        <name>ATP</name>
        <dbReference type="ChEBI" id="CHEBI:30616"/>
        <label>2</label>
    </ligand>
</feature>
<feature type="binding site" evidence="1">
    <location>
        <position position="830"/>
    </location>
    <ligand>
        <name>Mg(2+)</name>
        <dbReference type="ChEBI" id="CHEBI:18420"/>
        <label>3</label>
    </ligand>
</feature>
<feature type="binding site" evidence="1">
    <location>
        <position position="830"/>
    </location>
    <ligand>
        <name>Mn(2+)</name>
        <dbReference type="ChEBI" id="CHEBI:29035"/>
        <label>3</label>
    </ligand>
</feature>
<feature type="binding site" evidence="1">
    <location>
        <position position="842"/>
    </location>
    <ligand>
        <name>ATP</name>
        <dbReference type="ChEBI" id="CHEBI:30616"/>
        <label>2</label>
    </ligand>
</feature>
<feature type="binding site" evidence="1">
    <location>
        <position position="842"/>
    </location>
    <ligand>
        <name>Mg(2+)</name>
        <dbReference type="ChEBI" id="CHEBI:18420"/>
        <label>3</label>
    </ligand>
</feature>
<feature type="binding site" evidence="1">
    <location>
        <position position="842"/>
    </location>
    <ligand>
        <name>Mg(2+)</name>
        <dbReference type="ChEBI" id="CHEBI:18420"/>
        <label>4</label>
    </ligand>
</feature>
<feature type="binding site" evidence="1">
    <location>
        <position position="842"/>
    </location>
    <ligand>
        <name>Mn(2+)</name>
        <dbReference type="ChEBI" id="CHEBI:29035"/>
        <label>3</label>
    </ligand>
</feature>
<feature type="binding site" evidence="1">
    <location>
        <position position="842"/>
    </location>
    <ligand>
        <name>Mn(2+)</name>
        <dbReference type="ChEBI" id="CHEBI:29035"/>
        <label>4</label>
    </ligand>
</feature>
<feature type="binding site" evidence="1">
    <location>
        <position position="844"/>
    </location>
    <ligand>
        <name>Mg(2+)</name>
        <dbReference type="ChEBI" id="CHEBI:18420"/>
        <label>4</label>
    </ligand>
</feature>
<feature type="binding site" evidence="1">
    <location>
        <position position="844"/>
    </location>
    <ligand>
        <name>Mn(2+)</name>
        <dbReference type="ChEBI" id="CHEBI:29035"/>
        <label>4</label>
    </ligand>
</feature>
<protein>
    <recommendedName>
        <fullName evidence="1">Carbamoyl phosphate synthase large chain</fullName>
        <ecNumber evidence="1">6.3.4.16</ecNumber>
        <ecNumber evidence="1">6.3.5.5</ecNumber>
    </recommendedName>
    <alternativeName>
        <fullName evidence="1">Carbamoyl phosphate synthetase ammonia chain</fullName>
    </alternativeName>
</protein>
<evidence type="ECO:0000255" key="1">
    <source>
        <dbReference type="HAMAP-Rule" id="MF_01210"/>
    </source>
</evidence>
<comment type="function">
    <text evidence="1">Large subunit of the glutamine-dependent carbamoyl phosphate synthetase (CPSase). CPSase catalyzes the formation of carbamoyl phosphate from the ammonia moiety of glutamine, carbonate, and phosphate donated by ATP, constituting the first step of 2 biosynthetic pathways, one leading to arginine and/or urea and the other to pyrimidine nucleotides. The large subunit (synthetase) binds the substrates ammonia (free or transferred from glutamine from the small subunit), hydrogencarbonate and ATP and carries out an ATP-coupled ligase reaction, activating hydrogencarbonate by forming carboxy phosphate which reacts with ammonia to form carbamoyl phosphate.</text>
</comment>
<comment type="catalytic activity">
    <reaction evidence="1">
        <text>hydrogencarbonate + L-glutamine + 2 ATP + H2O = carbamoyl phosphate + L-glutamate + 2 ADP + phosphate + 2 H(+)</text>
        <dbReference type="Rhea" id="RHEA:18633"/>
        <dbReference type="ChEBI" id="CHEBI:15377"/>
        <dbReference type="ChEBI" id="CHEBI:15378"/>
        <dbReference type="ChEBI" id="CHEBI:17544"/>
        <dbReference type="ChEBI" id="CHEBI:29985"/>
        <dbReference type="ChEBI" id="CHEBI:30616"/>
        <dbReference type="ChEBI" id="CHEBI:43474"/>
        <dbReference type="ChEBI" id="CHEBI:58228"/>
        <dbReference type="ChEBI" id="CHEBI:58359"/>
        <dbReference type="ChEBI" id="CHEBI:456216"/>
        <dbReference type="EC" id="6.3.5.5"/>
    </reaction>
</comment>
<comment type="catalytic activity">
    <molecule>Carbamoyl phosphate synthase large chain</molecule>
    <reaction evidence="1">
        <text>hydrogencarbonate + NH4(+) + 2 ATP = carbamoyl phosphate + 2 ADP + phosphate + 2 H(+)</text>
        <dbReference type="Rhea" id="RHEA:18029"/>
        <dbReference type="ChEBI" id="CHEBI:15378"/>
        <dbReference type="ChEBI" id="CHEBI:17544"/>
        <dbReference type="ChEBI" id="CHEBI:28938"/>
        <dbReference type="ChEBI" id="CHEBI:30616"/>
        <dbReference type="ChEBI" id="CHEBI:43474"/>
        <dbReference type="ChEBI" id="CHEBI:58228"/>
        <dbReference type="ChEBI" id="CHEBI:456216"/>
        <dbReference type="EC" id="6.3.4.16"/>
    </reaction>
</comment>
<comment type="cofactor">
    <cofactor evidence="1">
        <name>Mg(2+)</name>
        <dbReference type="ChEBI" id="CHEBI:18420"/>
    </cofactor>
    <cofactor evidence="1">
        <name>Mn(2+)</name>
        <dbReference type="ChEBI" id="CHEBI:29035"/>
    </cofactor>
    <text evidence="1">Binds 4 Mg(2+) or Mn(2+) ions per subunit.</text>
</comment>
<comment type="pathway">
    <text evidence="1">Amino-acid biosynthesis; L-arginine biosynthesis; carbamoyl phosphate from bicarbonate: step 1/1.</text>
</comment>
<comment type="pathway">
    <text evidence="1">Pyrimidine metabolism; UMP biosynthesis via de novo pathway; (S)-dihydroorotate from bicarbonate: step 1/3.</text>
</comment>
<comment type="subunit">
    <text evidence="1">Composed of two chains; the small (or glutamine) chain promotes the hydrolysis of glutamine to ammonia, which is used by the large (or ammonia) chain to synthesize carbamoyl phosphate. Tetramer of heterodimers (alpha,beta)4.</text>
</comment>
<comment type="domain">
    <text evidence="1">The large subunit is composed of 2 ATP-grasp domains that are involved in binding the 2 ATP molecules needed for carbamoyl phosphate synthesis. The N-terminal ATP-grasp domain (referred to as the carboxyphosphate synthetic component) catalyzes the ATP-dependent phosphorylation of hydrogencarbonate to carboxyphosphate and the subsequent nucleophilic attack by ammonia to form a carbamate intermediate. The C-terminal ATP-grasp domain (referred to as the carbamoyl phosphate synthetic component) then catalyzes the phosphorylation of carbamate with the second ATP to form the end product carbamoyl phosphate. The reactive and unstable enzyme intermediates are sequentially channeled from one active site to the next through the interior of the protein over a distance of at least 96 A.</text>
</comment>
<comment type="similarity">
    <text evidence="1">Belongs to the CarB family.</text>
</comment>
<dbReference type="EC" id="6.3.4.16" evidence="1"/>
<dbReference type="EC" id="6.3.5.5" evidence="1"/>
<dbReference type="EMBL" id="AE000782">
    <property type="protein sequence ID" value="AAB89970.1"/>
    <property type="molecule type" value="Genomic_DNA"/>
</dbReference>
<dbReference type="PIR" id="A69409">
    <property type="entry name" value="A69409"/>
</dbReference>
<dbReference type="RefSeq" id="WP_010878769.1">
    <property type="nucleotide sequence ID" value="NC_000917.1"/>
</dbReference>
<dbReference type="SMR" id="O28994"/>
<dbReference type="STRING" id="224325.AF_1274"/>
<dbReference type="PaxDb" id="224325-AF_1274"/>
<dbReference type="EnsemblBacteria" id="AAB89970">
    <property type="protein sequence ID" value="AAB89970"/>
    <property type="gene ID" value="AF_1274"/>
</dbReference>
<dbReference type="GeneID" id="24794885"/>
<dbReference type="KEGG" id="afu:AF_1274"/>
<dbReference type="eggNOG" id="arCOG01594">
    <property type="taxonomic scope" value="Archaea"/>
</dbReference>
<dbReference type="HOGENOM" id="CLU_000513_1_0_2"/>
<dbReference type="OrthoDB" id="85487at2157"/>
<dbReference type="PhylomeDB" id="O28994"/>
<dbReference type="UniPathway" id="UPA00068">
    <property type="reaction ID" value="UER00171"/>
</dbReference>
<dbReference type="UniPathway" id="UPA00070">
    <property type="reaction ID" value="UER00115"/>
</dbReference>
<dbReference type="Proteomes" id="UP000002199">
    <property type="component" value="Chromosome"/>
</dbReference>
<dbReference type="GO" id="GO:0005737">
    <property type="term" value="C:cytoplasm"/>
    <property type="evidence" value="ECO:0007669"/>
    <property type="project" value="TreeGrafter"/>
</dbReference>
<dbReference type="GO" id="GO:0005524">
    <property type="term" value="F:ATP binding"/>
    <property type="evidence" value="ECO:0007669"/>
    <property type="project" value="UniProtKB-UniRule"/>
</dbReference>
<dbReference type="GO" id="GO:0004087">
    <property type="term" value="F:carbamoyl-phosphate synthase (ammonia) activity"/>
    <property type="evidence" value="ECO:0007669"/>
    <property type="project" value="RHEA"/>
</dbReference>
<dbReference type="GO" id="GO:0004088">
    <property type="term" value="F:carbamoyl-phosphate synthase (glutamine-hydrolyzing) activity"/>
    <property type="evidence" value="ECO:0007669"/>
    <property type="project" value="UniProtKB-UniRule"/>
</dbReference>
<dbReference type="GO" id="GO:0046872">
    <property type="term" value="F:metal ion binding"/>
    <property type="evidence" value="ECO:0007669"/>
    <property type="project" value="UniProtKB-KW"/>
</dbReference>
<dbReference type="GO" id="GO:0044205">
    <property type="term" value="P:'de novo' UMP biosynthetic process"/>
    <property type="evidence" value="ECO:0007669"/>
    <property type="project" value="UniProtKB-UniRule"/>
</dbReference>
<dbReference type="GO" id="GO:0006541">
    <property type="term" value="P:glutamine metabolic process"/>
    <property type="evidence" value="ECO:0007669"/>
    <property type="project" value="TreeGrafter"/>
</dbReference>
<dbReference type="GO" id="GO:0006526">
    <property type="term" value="P:L-arginine biosynthetic process"/>
    <property type="evidence" value="ECO:0007669"/>
    <property type="project" value="UniProtKB-UniRule"/>
</dbReference>
<dbReference type="CDD" id="cd01424">
    <property type="entry name" value="MGS_CPS_II"/>
    <property type="match status" value="1"/>
</dbReference>
<dbReference type="FunFam" id="1.10.1030.10:FF:000002">
    <property type="entry name" value="Carbamoyl-phosphate synthase large chain"/>
    <property type="match status" value="1"/>
</dbReference>
<dbReference type="FunFam" id="3.30.1490.20:FF:000001">
    <property type="entry name" value="Carbamoyl-phosphate synthase large chain"/>
    <property type="match status" value="1"/>
</dbReference>
<dbReference type="FunFam" id="3.30.470.20:FF:000007">
    <property type="entry name" value="Carbamoyl-phosphate synthase large chain"/>
    <property type="match status" value="1"/>
</dbReference>
<dbReference type="FunFam" id="3.30.470.20:FF:000013">
    <property type="entry name" value="Carbamoyl-phosphate synthase large chain"/>
    <property type="match status" value="1"/>
</dbReference>
<dbReference type="FunFam" id="3.40.50.20:FF:000001">
    <property type="entry name" value="Carbamoyl-phosphate synthase large chain"/>
    <property type="match status" value="1"/>
</dbReference>
<dbReference type="FunFam" id="3.40.50.20:FF:000003">
    <property type="entry name" value="Carbamoyl-phosphate synthase large chain"/>
    <property type="match status" value="1"/>
</dbReference>
<dbReference type="Gene3D" id="3.40.50.20">
    <property type="match status" value="2"/>
</dbReference>
<dbReference type="Gene3D" id="3.30.470.20">
    <property type="entry name" value="ATP-grasp fold, B domain"/>
    <property type="match status" value="2"/>
</dbReference>
<dbReference type="Gene3D" id="1.10.1030.10">
    <property type="entry name" value="Carbamoyl-phosphate synthetase, large subunit oligomerisation domain"/>
    <property type="match status" value="1"/>
</dbReference>
<dbReference type="Gene3D" id="3.40.50.1380">
    <property type="entry name" value="Methylglyoxal synthase-like domain"/>
    <property type="match status" value="1"/>
</dbReference>
<dbReference type="HAMAP" id="MF_01210_A">
    <property type="entry name" value="CPSase_L_chain_A"/>
    <property type="match status" value="1"/>
</dbReference>
<dbReference type="HAMAP" id="MF_01210_B">
    <property type="entry name" value="CPSase_L_chain_B"/>
    <property type="match status" value="1"/>
</dbReference>
<dbReference type="InterPro" id="IPR011761">
    <property type="entry name" value="ATP-grasp"/>
</dbReference>
<dbReference type="InterPro" id="IPR006275">
    <property type="entry name" value="CarbamoylP_synth_lsu"/>
</dbReference>
<dbReference type="InterPro" id="IPR005480">
    <property type="entry name" value="CarbamoylP_synth_lsu_oligo"/>
</dbReference>
<dbReference type="InterPro" id="IPR036897">
    <property type="entry name" value="CarbamoylP_synth_lsu_oligo_sf"/>
</dbReference>
<dbReference type="InterPro" id="IPR005479">
    <property type="entry name" value="CbamoylP_synth_lsu-like_ATP-bd"/>
</dbReference>
<dbReference type="InterPro" id="IPR005483">
    <property type="entry name" value="CbamoylP_synth_lsu_CPSase_dom"/>
</dbReference>
<dbReference type="InterPro" id="IPR011607">
    <property type="entry name" value="MGS-like_dom"/>
</dbReference>
<dbReference type="InterPro" id="IPR036914">
    <property type="entry name" value="MGS-like_dom_sf"/>
</dbReference>
<dbReference type="InterPro" id="IPR033937">
    <property type="entry name" value="MGS_CPS_CarB"/>
</dbReference>
<dbReference type="InterPro" id="IPR016185">
    <property type="entry name" value="PreATP-grasp_dom_sf"/>
</dbReference>
<dbReference type="NCBIfam" id="TIGR01369">
    <property type="entry name" value="CPSaseII_lrg"/>
    <property type="match status" value="1"/>
</dbReference>
<dbReference type="NCBIfam" id="NF003671">
    <property type="entry name" value="PRK05294.1"/>
    <property type="match status" value="1"/>
</dbReference>
<dbReference type="NCBIfam" id="NF009455">
    <property type="entry name" value="PRK12815.1"/>
    <property type="match status" value="1"/>
</dbReference>
<dbReference type="PANTHER" id="PTHR11405:SF53">
    <property type="entry name" value="CARBAMOYL-PHOSPHATE SYNTHASE [AMMONIA], MITOCHONDRIAL"/>
    <property type="match status" value="1"/>
</dbReference>
<dbReference type="PANTHER" id="PTHR11405">
    <property type="entry name" value="CARBAMOYLTRANSFERASE FAMILY MEMBER"/>
    <property type="match status" value="1"/>
</dbReference>
<dbReference type="Pfam" id="PF02786">
    <property type="entry name" value="CPSase_L_D2"/>
    <property type="match status" value="2"/>
</dbReference>
<dbReference type="Pfam" id="PF02787">
    <property type="entry name" value="CPSase_L_D3"/>
    <property type="match status" value="1"/>
</dbReference>
<dbReference type="Pfam" id="PF02142">
    <property type="entry name" value="MGS"/>
    <property type="match status" value="1"/>
</dbReference>
<dbReference type="PRINTS" id="PR00098">
    <property type="entry name" value="CPSASE"/>
</dbReference>
<dbReference type="SMART" id="SM01096">
    <property type="entry name" value="CPSase_L_D3"/>
    <property type="match status" value="1"/>
</dbReference>
<dbReference type="SMART" id="SM00851">
    <property type="entry name" value="MGS"/>
    <property type="match status" value="1"/>
</dbReference>
<dbReference type="SUPFAM" id="SSF48108">
    <property type="entry name" value="Carbamoyl phosphate synthetase, large subunit connection domain"/>
    <property type="match status" value="1"/>
</dbReference>
<dbReference type="SUPFAM" id="SSF56059">
    <property type="entry name" value="Glutathione synthetase ATP-binding domain-like"/>
    <property type="match status" value="2"/>
</dbReference>
<dbReference type="SUPFAM" id="SSF52335">
    <property type="entry name" value="Methylglyoxal synthase-like"/>
    <property type="match status" value="1"/>
</dbReference>
<dbReference type="SUPFAM" id="SSF52440">
    <property type="entry name" value="PreATP-grasp domain"/>
    <property type="match status" value="2"/>
</dbReference>
<dbReference type="PROSITE" id="PS50975">
    <property type="entry name" value="ATP_GRASP"/>
    <property type="match status" value="2"/>
</dbReference>
<dbReference type="PROSITE" id="PS00866">
    <property type="entry name" value="CPSASE_1"/>
    <property type="match status" value="2"/>
</dbReference>
<dbReference type="PROSITE" id="PS00867">
    <property type="entry name" value="CPSASE_2"/>
    <property type="match status" value="1"/>
</dbReference>
<dbReference type="PROSITE" id="PS51855">
    <property type="entry name" value="MGS"/>
    <property type="match status" value="1"/>
</dbReference>
<keyword id="KW-0028">Amino-acid biosynthesis</keyword>
<keyword id="KW-0055">Arginine biosynthesis</keyword>
<keyword id="KW-0067">ATP-binding</keyword>
<keyword id="KW-0436">Ligase</keyword>
<keyword id="KW-0460">Magnesium</keyword>
<keyword id="KW-0464">Manganese</keyword>
<keyword id="KW-0479">Metal-binding</keyword>
<keyword id="KW-0547">Nucleotide-binding</keyword>
<keyword id="KW-0665">Pyrimidine biosynthesis</keyword>
<keyword id="KW-1185">Reference proteome</keyword>
<keyword id="KW-0677">Repeat</keyword>
<organism>
    <name type="scientific">Archaeoglobus fulgidus (strain ATCC 49558 / DSM 4304 / JCM 9628 / NBRC 100126 / VC-16)</name>
    <dbReference type="NCBI Taxonomy" id="224325"/>
    <lineage>
        <taxon>Archaea</taxon>
        <taxon>Methanobacteriati</taxon>
        <taxon>Methanobacteriota</taxon>
        <taxon>Archaeoglobi</taxon>
        <taxon>Archaeoglobales</taxon>
        <taxon>Archaeoglobaceae</taxon>
        <taxon>Archaeoglobus</taxon>
    </lineage>
</organism>
<gene>
    <name evidence="1" type="primary">carB</name>
    <name type="ordered locus">AF_1274</name>
</gene>